<gene>
    <name evidence="1" type="primary">aroC</name>
    <name type="ordered locus">HNE_0823</name>
</gene>
<feature type="chain" id="PRO_1000022499" description="Chorismate synthase">
    <location>
        <begin position="1"/>
        <end position="363"/>
    </location>
</feature>
<feature type="binding site" evidence="1">
    <location>
        <position position="48"/>
    </location>
    <ligand>
        <name>NADP(+)</name>
        <dbReference type="ChEBI" id="CHEBI:58349"/>
    </ligand>
</feature>
<feature type="binding site" evidence="1">
    <location>
        <position position="54"/>
    </location>
    <ligand>
        <name>NADP(+)</name>
        <dbReference type="ChEBI" id="CHEBI:58349"/>
    </ligand>
</feature>
<feature type="binding site" evidence="1">
    <location>
        <begin position="131"/>
        <end position="133"/>
    </location>
    <ligand>
        <name>FMN</name>
        <dbReference type="ChEBI" id="CHEBI:58210"/>
    </ligand>
</feature>
<feature type="binding site" evidence="1">
    <location>
        <begin position="244"/>
        <end position="245"/>
    </location>
    <ligand>
        <name>FMN</name>
        <dbReference type="ChEBI" id="CHEBI:58210"/>
    </ligand>
</feature>
<feature type="binding site" evidence="1">
    <location>
        <position position="288"/>
    </location>
    <ligand>
        <name>FMN</name>
        <dbReference type="ChEBI" id="CHEBI:58210"/>
    </ligand>
</feature>
<feature type="binding site" evidence="1">
    <location>
        <begin position="303"/>
        <end position="307"/>
    </location>
    <ligand>
        <name>FMN</name>
        <dbReference type="ChEBI" id="CHEBI:58210"/>
    </ligand>
</feature>
<feature type="binding site" evidence="1">
    <location>
        <position position="329"/>
    </location>
    <ligand>
        <name>FMN</name>
        <dbReference type="ChEBI" id="CHEBI:58210"/>
    </ligand>
</feature>
<keyword id="KW-0028">Amino-acid biosynthesis</keyword>
<keyword id="KW-0057">Aromatic amino acid biosynthesis</keyword>
<keyword id="KW-0274">FAD</keyword>
<keyword id="KW-0285">Flavoprotein</keyword>
<keyword id="KW-0288">FMN</keyword>
<keyword id="KW-0456">Lyase</keyword>
<keyword id="KW-0521">NADP</keyword>
<keyword id="KW-1185">Reference proteome</keyword>
<reference key="1">
    <citation type="journal article" date="2006" name="J. Bacteriol.">
        <title>Comparative genomic evidence for a close relationship between the dimorphic prosthecate bacteria Hyphomonas neptunium and Caulobacter crescentus.</title>
        <authorList>
            <person name="Badger J.H."/>
            <person name="Hoover T.R."/>
            <person name="Brun Y.V."/>
            <person name="Weiner R.M."/>
            <person name="Laub M.T."/>
            <person name="Alexandre G."/>
            <person name="Mrazek J."/>
            <person name="Ren Q."/>
            <person name="Paulsen I.T."/>
            <person name="Nelson K.E."/>
            <person name="Khouri H.M."/>
            <person name="Radune D."/>
            <person name="Sosa J."/>
            <person name="Dodson R.J."/>
            <person name="Sullivan S.A."/>
            <person name="Rosovitz M.J."/>
            <person name="Madupu R."/>
            <person name="Brinkac L.M."/>
            <person name="Durkin A.S."/>
            <person name="Daugherty S.C."/>
            <person name="Kothari S.P."/>
            <person name="Giglio M.G."/>
            <person name="Zhou L."/>
            <person name="Haft D.H."/>
            <person name="Selengut J.D."/>
            <person name="Davidsen T.M."/>
            <person name="Yang Q."/>
            <person name="Zafar N."/>
            <person name="Ward N.L."/>
        </authorList>
    </citation>
    <scope>NUCLEOTIDE SEQUENCE [LARGE SCALE GENOMIC DNA]</scope>
    <source>
        <strain>ATCC 15444</strain>
    </source>
</reference>
<protein>
    <recommendedName>
        <fullName evidence="1">Chorismate synthase</fullName>
        <shortName evidence="1">CS</shortName>
        <ecNumber evidence="1">4.2.3.5</ecNumber>
    </recommendedName>
    <alternativeName>
        <fullName evidence="1">5-enolpyruvylshikimate-3-phosphate phospholyase</fullName>
    </alternativeName>
</protein>
<accession>Q0C3Z3</accession>
<proteinExistence type="inferred from homology"/>
<organism>
    <name type="scientific">Hyphomonas neptunium (strain ATCC 15444)</name>
    <dbReference type="NCBI Taxonomy" id="228405"/>
    <lineage>
        <taxon>Bacteria</taxon>
        <taxon>Pseudomonadati</taxon>
        <taxon>Pseudomonadota</taxon>
        <taxon>Alphaproteobacteria</taxon>
        <taxon>Hyphomonadales</taxon>
        <taxon>Hyphomonadaceae</taxon>
        <taxon>Hyphomonas</taxon>
    </lineage>
</organism>
<dbReference type="EC" id="4.2.3.5" evidence="1"/>
<dbReference type="EMBL" id="CP000158">
    <property type="protein sequence ID" value="ABI75729.1"/>
    <property type="molecule type" value="Genomic_DNA"/>
</dbReference>
<dbReference type="RefSeq" id="WP_011645850.1">
    <property type="nucleotide sequence ID" value="NC_008358.1"/>
</dbReference>
<dbReference type="SMR" id="Q0C3Z3"/>
<dbReference type="STRING" id="228405.HNE_0823"/>
<dbReference type="KEGG" id="hne:HNE_0823"/>
<dbReference type="eggNOG" id="COG0082">
    <property type="taxonomic scope" value="Bacteria"/>
</dbReference>
<dbReference type="HOGENOM" id="CLU_034547_0_0_5"/>
<dbReference type="UniPathway" id="UPA00053">
    <property type="reaction ID" value="UER00090"/>
</dbReference>
<dbReference type="Proteomes" id="UP000001959">
    <property type="component" value="Chromosome"/>
</dbReference>
<dbReference type="GO" id="GO:0005829">
    <property type="term" value="C:cytosol"/>
    <property type="evidence" value="ECO:0007669"/>
    <property type="project" value="TreeGrafter"/>
</dbReference>
<dbReference type="GO" id="GO:0004107">
    <property type="term" value="F:chorismate synthase activity"/>
    <property type="evidence" value="ECO:0007669"/>
    <property type="project" value="UniProtKB-UniRule"/>
</dbReference>
<dbReference type="GO" id="GO:0010181">
    <property type="term" value="F:FMN binding"/>
    <property type="evidence" value="ECO:0007669"/>
    <property type="project" value="TreeGrafter"/>
</dbReference>
<dbReference type="GO" id="GO:0008652">
    <property type="term" value="P:amino acid biosynthetic process"/>
    <property type="evidence" value="ECO:0007669"/>
    <property type="project" value="UniProtKB-KW"/>
</dbReference>
<dbReference type="GO" id="GO:0009073">
    <property type="term" value="P:aromatic amino acid family biosynthetic process"/>
    <property type="evidence" value="ECO:0007669"/>
    <property type="project" value="UniProtKB-KW"/>
</dbReference>
<dbReference type="GO" id="GO:0009423">
    <property type="term" value="P:chorismate biosynthetic process"/>
    <property type="evidence" value="ECO:0007669"/>
    <property type="project" value="UniProtKB-UniRule"/>
</dbReference>
<dbReference type="CDD" id="cd07304">
    <property type="entry name" value="Chorismate_synthase"/>
    <property type="match status" value="1"/>
</dbReference>
<dbReference type="Gene3D" id="3.60.150.10">
    <property type="entry name" value="Chorismate synthase AroC"/>
    <property type="match status" value="1"/>
</dbReference>
<dbReference type="HAMAP" id="MF_00300">
    <property type="entry name" value="Chorismate_synth"/>
    <property type="match status" value="1"/>
</dbReference>
<dbReference type="InterPro" id="IPR000453">
    <property type="entry name" value="Chorismate_synth"/>
</dbReference>
<dbReference type="InterPro" id="IPR035904">
    <property type="entry name" value="Chorismate_synth_AroC_sf"/>
</dbReference>
<dbReference type="InterPro" id="IPR020541">
    <property type="entry name" value="Chorismate_synthase_CS"/>
</dbReference>
<dbReference type="NCBIfam" id="TIGR00033">
    <property type="entry name" value="aroC"/>
    <property type="match status" value="1"/>
</dbReference>
<dbReference type="NCBIfam" id="NF003793">
    <property type="entry name" value="PRK05382.1"/>
    <property type="match status" value="1"/>
</dbReference>
<dbReference type="PANTHER" id="PTHR21085">
    <property type="entry name" value="CHORISMATE SYNTHASE"/>
    <property type="match status" value="1"/>
</dbReference>
<dbReference type="PANTHER" id="PTHR21085:SF0">
    <property type="entry name" value="CHORISMATE SYNTHASE"/>
    <property type="match status" value="1"/>
</dbReference>
<dbReference type="Pfam" id="PF01264">
    <property type="entry name" value="Chorismate_synt"/>
    <property type="match status" value="1"/>
</dbReference>
<dbReference type="PIRSF" id="PIRSF001456">
    <property type="entry name" value="Chorismate_synth"/>
    <property type="match status" value="1"/>
</dbReference>
<dbReference type="SUPFAM" id="SSF103263">
    <property type="entry name" value="Chorismate synthase, AroC"/>
    <property type="match status" value="1"/>
</dbReference>
<dbReference type="PROSITE" id="PS00787">
    <property type="entry name" value="CHORISMATE_SYNTHASE_1"/>
    <property type="match status" value="1"/>
</dbReference>
<dbReference type="PROSITE" id="PS00788">
    <property type="entry name" value="CHORISMATE_SYNTHASE_2"/>
    <property type="match status" value="1"/>
</dbReference>
<dbReference type="PROSITE" id="PS00789">
    <property type="entry name" value="CHORISMATE_SYNTHASE_3"/>
    <property type="match status" value="1"/>
</dbReference>
<sequence>MSHNTFGHLFRVTTWGESHGPALGCVIDGCPPGLSLDAPFIQQFLDKRRPGTSRFVTQRQEADEVKILSGVFEDDRTDGPVTTGTPISLMIENTDQRSKDYREIRDRYRPGHADYAYDQKYGVRDYRGGGRSSARETAARVAAGAVARRVLGEDILLRGAVVQIGPHMIDPKNWDWAETQNNPFWCPDAKMAAQWETYLDSVRKSGSSTGAIVEVHASGVPAGWGAPVYGKLDAELAGAMMSINAAKGVEIGAGFAAASMSGEENADEMRAGNDAPRFLANNNGGVAGGISTGQDIVVRIAIKPTSSILNEVKSITRDGEEVDVRTIGRHDPCVGIRAVPVAEAMLACVLADAKLRHRGQTGH</sequence>
<evidence type="ECO:0000255" key="1">
    <source>
        <dbReference type="HAMAP-Rule" id="MF_00300"/>
    </source>
</evidence>
<comment type="function">
    <text evidence="1">Catalyzes the anti-1,4-elimination of the C-3 phosphate and the C-6 proR hydrogen from 5-enolpyruvylshikimate-3-phosphate (EPSP) to yield chorismate, which is the branch point compound that serves as the starting substrate for the three terminal pathways of aromatic amino acid biosynthesis. This reaction introduces a second double bond into the aromatic ring system.</text>
</comment>
<comment type="catalytic activity">
    <reaction evidence="1">
        <text>5-O-(1-carboxyvinyl)-3-phosphoshikimate = chorismate + phosphate</text>
        <dbReference type="Rhea" id="RHEA:21020"/>
        <dbReference type="ChEBI" id="CHEBI:29748"/>
        <dbReference type="ChEBI" id="CHEBI:43474"/>
        <dbReference type="ChEBI" id="CHEBI:57701"/>
        <dbReference type="EC" id="4.2.3.5"/>
    </reaction>
</comment>
<comment type="cofactor">
    <cofactor evidence="1">
        <name>FMNH2</name>
        <dbReference type="ChEBI" id="CHEBI:57618"/>
    </cofactor>
    <text evidence="1">Reduced FMN (FMNH(2)).</text>
</comment>
<comment type="pathway">
    <text evidence="1">Metabolic intermediate biosynthesis; chorismate biosynthesis; chorismate from D-erythrose 4-phosphate and phosphoenolpyruvate: step 7/7.</text>
</comment>
<comment type="subunit">
    <text evidence="1">Homotetramer.</text>
</comment>
<comment type="similarity">
    <text evidence="1">Belongs to the chorismate synthase family.</text>
</comment>
<name>AROC_HYPNA</name>